<feature type="chain" id="PRO_1000204954" description="Chorismate synthase">
    <location>
        <begin position="1"/>
        <end position="388"/>
    </location>
</feature>
<feature type="region of interest" description="Disordered" evidence="2">
    <location>
        <begin position="95"/>
        <end position="118"/>
    </location>
</feature>
<feature type="binding site" evidence="1">
    <location>
        <position position="39"/>
    </location>
    <ligand>
        <name>NADP(+)</name>
        <dbReference type="ChEBI" id="CHEBI:58349"/>
    </ligand>
</feature>
<feature type="binding site" evidence="1">
    <location>
        <position position="45"/>
    </location>
    <ligand>
        <name>NADP(+)</name>
        <dbReference type="ChEBI" id="CHEBI:58349"/>
    </ligand>
</feature>
<feature type="binding site" evidence="1">
    <location>
        <begin position="130"/>
        <end position="132"/>
    </location>
    <ligand>
        <name>FMN</name>
        <dbReference type="ChEBI" id="CHEBI:58210"/>
    </ligand>
</feature>
<feature type="binding site" evidence="1">
    <location>
        <begin position="251"/>
        <end position="252"/>
    </location>
    <ligand>
        <name>FMN</name>
        <dbReference type="ChEBI" id="CHEBI:58210"/>
    </ligand>
</feature>
<feature type="binding site" evidence="1">
    <location>
        <position position="296"/>
    </location>
    <ligand>
        <name>FMN</name>
        <dbReference type="ChEBI" id="CHEBI:58210"/>
    </ligand>
</feature>
<feature type="binding site" evidence="1">
    <location>
        <begin position="311"/>
        <end position="315"/>
    </location>
    <ligand>
        <name>FMN</name>
        <dbReference type="ChEBI" id="CHEBI:58210"/>
    </ligand>
</feature>
<feature type="binding site" evidence="1">
    <location>
        <position position="337"/>
    </location>
    <ligand>
        <name>FMN</name>
        <dbReference type="ChEBI" id="CHEBI:58210"/>
    </ligand>
</feature>
<sequence>MRYLTAGESHGPGLTTIIEGLPAGMPLLAEDVNKELKRRQGGHGRGARMRIEKDQVQITAGIRHGKTLGAPVAMFVENKDWKHWETVMSIEPVPEKNEKSRRVSRPRPGHADLVGGMKYGHNDMRNVLERSSARETTVRVAAGAVAKKLLHELGIEVAGHVLEIGGTRANLTRDYAVREIQETSEASPVRCLDGVAAEEMMQKIDDAKKNGDTIGGIVEVVVGGVPAGLGSYVQWDKKLDAKIARAIVSINAFKGAEFGVGFEAARKPGSEVMDEILWSKEDGYTRRTNNLGGFEGGMTNGMPIVVRGVMKPIPTLYKPLQSVDIDSKETFNASVERSDSCAVPAASVVAEAVVAWEVAVAVLEKFDGDRFDTLKKHVEEHRNLTKEF</sequence>
<comment type="function">
    <text evidence="1">Catalyzes the anti-1,4-elimination of the C-3 phosphate and the C-6 proR hydrogen from 5-enolpyruvylshikimate-3-phosphate (EPSP) to yield chorismate, which is the branch point compound that serves as the starting substrate for the three terminal pathways of aromatic amino acid biosynthesis. This reaction introduces a second double bond into the aromatic ring system.</text>
</comment>
<comment type="catalytic activity">
    <reaction evidence="1">
        <text>5-O-(1-carboxyvinyl)-3-phosphoshikimate = chorismate + phosphate</text>
        <dbReference type="Rhea" id="RHEA:21020"/>
        <dbReference type="ChEBI" id="CHEBI:29748"/>
        <dbReference type="ChEBI" id="CHEBI:43474"/>
        <dbReference type="ChEBI" id="CHEBI:57701"/>
        <dbReference type="EC" id="4.2.3.5"/>
    </reaction>
</comment>
<comment type="cofactor">
    <cofactor evidence="1">
        <name>FMNH2</name>
        <dbReference type="ChEBI" id="CHEBI:57618"/>
    </cofactor>
    <text evidence="1">Reduced FMN (FMNH(2)).</text>
</comment>
<comment type="pathway">
    <text evidence="1">Metabolic intermediate biosynthesis; chorismate biosynthesis; chorismate from D-erythrose 4-phosphate and phosphoenolpyruvate: step 7/7.</text>
</comment>
<comment type="subunit">
    <text evidence="1">Homotetramer.</text>
</comment>
<comment type="similarity">
    <text evidence="1">Belongs to the chorismate synthase family.</text>
</comment>
<protein>
    <recommendedName>
        <fullName evidence="1">Chorismate synthase</fullName>
        <shortName evidence="1">CS</shortName>
        <ecNumber evidence="1">4.2.3.5</ecNumber>
    </recommendedName>
    <alternativeName>
        <fullName evidence="1">5-enolpyruvylshikimate-3-phosphate phospholyase</fullName>
    </alternativeName>
</protein>
<gene>
    <name evidence="1" type="primary">aroC</name>
    <name type="ordered locus">Lm4b_01945</name>
</gene>
<organism>
    <name type="scientific">Listeria monocytogenes serotype 4b (strain CLIP80459)</name>
    <dbReference type="NCBI Taxonomy" id="568819"/>
    <lineage>
        <taxon>Bacteria</taxon>
        <taxon>Bacillati</taxon>
        <taxon>Bacillota</taxon>
        <taxon>Bacilli</taxon>
        <taxon>Bacillales</taxon>
        <taxon>Listeriaceae</taxon>
        <taxon>Listeria</taxon>
    </lineage>
</organism>
<accession>C1KWM8</accession>
<keyword id="KW-0028">Amino-acid biosynthesis</keyword>
<keyword id="KW-0057">Aromatic amino acid biosynthesis</keyword>
<keyword id="KW-0274">FAD</keyword>
<keyword id="KW-0285">Flavoprotein</keyword>
<keyword id="KW-0288">FMN</keyword>
<keyword id="KW-0456">Lyase</keyword>
<keyword id="KW-0521">NADP</keyword>
<proteinExistence type="inferred from homology"/>
<dbReference type="EC" id="4.2.3.5" evidence="1"/>
<dbReference type="EMBL" id="FM242711">
    <property type="protein sequence ID" value="CAS05703.1"/>
    <property type="molecule type" value="Genomic_DNA"/>
</dbReference>
<dbReference type="RefSeq" id="WP_003728000.1">
    <property type="nucleotide sequence ID" value="NC_012488.1"/>
</dbReference>
<dbReference type="SMR" id="C1KWM8"/>
<dbReference type="KEGG" id="lmc:Lm4b_01945"/>
<dbReference type="HOGENOM" id="CLU_034547_2_0_9"/>
<dbReference type="UniPathway" id="UPA00053">
    <property type="reaction ID" value="UER00090"/>
</dbReference>
<dbReference type="GO" id="GO:0005829">
    <property type="term" value="C:cytosol"/>
    <property type="evidence" value="ECO:0007669"/>
    <property type="project" value="TreeGrafter"/>
</dbReference>
<dbReference type="GO" id="GO:0004107">
    <property type="term" value="F:chorismate synthase activity"/>
    <property type="evidence" value="ECO:0007669"/>
    <property type="project" value="UniProtKB-UniRule"/>
</dbReference>
<dbReference type="GO" id="GO:0010181">
    <property type="term" value="F:FMN binding"/>
    <property type="evidence" value="ECO:0007669"/>
    <property type="project" value="TreeGrafter"/>
</dbReference>
<dbReference type="GO" id="GO:0008652">
    <property type="term" value="P:amino acid biosynthetic process"/>
    <property type="evidence" value="ECO:0007669"/>
    <property type="project" value="UniProtKB-KW"/>
</dbReference>
<dbReference type="GO" id="GO:0009073">
    <property type="term" value="P:aromatic amino acid family biosynthetic process"/>
    <property type="evidence" value="ECO:0007669"/>
    <property type="project" value="UniProtKB-KW"/>
</dbReference>
<dbReference type="GO" id="GO:0009423">
    <property type="term" value="P:chorismate biosynthetic process"/>
    <property type="evidence" value="ECO:0007669"/>
    <property type="project" value="UniProtKB-UniRule"/>
</dbReference>
<dbReference type="CDD" id="cd07304">
    <property type="entry name" value="Chorismate_synthase"/>
    <property type="match status" value="1"/>
</dbReference>
<dbReference type="FunFam" id="3.60.150.10:FF:000002">
    <property type="entry name" value="Chorismate synthase"/>
    <property type="match status" value="1"/>
</dbReference>
<dbReference type="Gene3D" id="3.60.150.10">
    <property type="entry name" value="Chorismate synthase AroC"/>
    <property type="match status" value="1"/>
</dbReference>
<dbReference type="HAMAP" id="MF_00300">
    <property type="entry name" value="Chorismate_synth"/>
    <property type="match status" value="1"/>
</dbReference>
<dbReference type="InterPro" id="IPR000453">
    <property type="entry name" value="Chorismate_synth"/>
</dbReference>
<dbReference type="InterPro" id="IPR035904">
    <property type="entry name" value="Chorismate_synth_AroC_sf"/>
</dbReference>
<dbReference type="InterPro" id="IPR020541">
    <property type="entry name" value="Chorismate_synthase_CS"/>
</dbReference>
<dbReference type="NCBIfam" id="TIGR00033">
    <property type="entry name" value="aroC"/>
    <property type="match status" value="1"/>
</dbReference>
<dbReference type="NCBIfam" id="NF003793">
    <property type="entry name" value="PRK05382.1"/>
    <property type="match status" value="1"/>
</dbReference>
<dbReference type="PANTHER" id="PTHR21085">
    <property type="entry name" value="CHORISMATE SYNTHASE"/>
    <property type="match status" value="1"/>
</dbReference>
<dbReference type="PANTHER" id="PTHR21085:SF0">
    <property type="entry name" value="CHORISMATE SYNTHASE"/>
    <property type="match status" value="1"/>
</dbReference>
<dbReference type="Pfam" id="PF01264">
    <property type="entry name" value="Chorismate_synt"/>
    <property type="match status" value="1"/>
</dbReference>
<dbReference type="PIRSF" id="PIRSF001456">
    <property type="entry name" value="Chorismate_synth"/>
    <property type="match status" value="1"/>
</dbReference>
<dbReference type="SUPFAM" id="SSF103263">
    <property type="entry name" value="Chorismate synthase, AroC"/>
    <property type="match status" value="1"/>
</dbReference>
<dbReference type="PROSITE" id="PS00787">
    <property type="entry name" value="CHORISMATE_SYNTHASE_1"/>
    <property type="match status" value="1"/>
</dbReference>
<dbReference type="PROSITE" id="PS00788">
    <property type="entry name" value="CHORISMATE_SYNTHASE_2"/>
    <property type="match status" value="1"/>
</dbReference>
<dbReference type="PROSITE" id="PS00789">
    <property type="entry name" value="CHORISMATE_SYNTHASE_3"/>
    <property type="match status" value="1"/>
</dbReference>
<name>AROC_LISMC</name>
<reference key="1">
    <citation type="journal article" date="2012" name="BMC Genomics">
        <title>Comparative genomics and transcriptomics of lineages I, II, and III strains of Listeria monocytogenes.</title>
        <authorList>
            <person name="Hain T."/>
            <person name="Ghai R."/>
            <person name="Billion A."/>
            <person name="Kuenne C.T."/>
            <person name="Steinweg C."/>
            <person name="Izar B."/>
            <person name="Mohamed W."/>
            <person name="Mraheil M."/>
            <person name="Domann E."/>
            <person name="Schaffrath S."/>
            <person name="Karst U."/>
            <person name="Goesmann A."/>
            <person name="Oehm S."/>
            <person name="Puhler A."/>
            <person name="Merkl R."/>
            <person name="Vorwerk S."/>
            <person name="Glaser P."/>
            <person name="Garrido P."/>
            <person name="Rusniok C."/>
            <person name="Buchrieser C."/>
            <person name="Goebel W."/>
            <person name="Chakraborty T."/>
        </authorList>
    </citation>
    <scope>NUCLEOTIDE SEQUENCE [LARGE SCALE GENOMIC DNA]</scope>
    <source>
        <strain>CLIP80459</strain>
    </source>
</reference>
<evidence type="ECO:0000255" key="1">
    <source>
        <dbReference type="HAMAP-Rule" id="MF_00300"/>
    </source>
</evidence>
<evidence type="ECO:0000256" key="2">
    <source>
        <dbReference type="SAM" id="MobiDB-lite"/>
    </source>
</evidence>